<evidence type="ECO:0000250" key="1"/>
<evidence type="ECO:0000255" key="2"/>
<evidence type="ECO:0000255" key="3">
    <source>
        <dbReference type="PROSITE-ProRule" id="PRU00448"/>
    </source>
</evidence>
<evidence type="ECO:0000269" key="4">
    <source>
    </source>
</evidence>
<evidence type="ECO:0000269" key="5">
    <source>
    </source>
</evidence>
<evidence type="ECO:0000269" key="6">
    <source>
    </source>
</evidence>
<evidence type="ECO:0000305" key="7"/>
<evidence type="ECO:0000312" key="8">
    <source>
        <dbReference type="EMBL" id="EEE64483.1"/>
    </source>
</evidence>
<comment type="function">
    <text evidence="5">Acts as a calcium sensor involved in the regulatory pathway for the control of intracellular Na(+) and K(+) homeostasis and salt tolerance. Operates in synergy with CIPK24 to activate the plasma membrane Na(+)/H(+) antiporter SOS1. May function as positive regulator of salt stress responses. CBL proteins interact with CIPK serine-threonine protein kinases. Binding of a CBL protein to the regulatory NAF domain of a CIPK protein lead to the activation of the kinase in a calcium-dependent manner.</text>
</comment>
<comment type="subunit">
    <text evidence="1 5">Homodimer (By similarity). Interacts with CIPK24.</text>
</comment>
<comment type="subcellular location">
    <subcellularLocation>
        <location evidence="4">Cell membrane</location>
        <topology evidence="4">Lipid-anchor</topology>
    </subcellularLocation>
    <text evidence="7">Aleurone cells.</text>
</comment>
<comment type="tissue specificity">
    <text evidence="6">Expressed in leaves.</text>
</comment>
<comment type="induction">
    <text evidence="6">By drought stress and abscisic acid (ABA).</text>
</comment>
<comment type="similarity">
    <text evidence="7">Belongs to the calcineurin regulatory subunit family.</text>
</comment>
<protein>
    <recommendedName>
        <fullName>Calcineurin B-like protein 4</fullName>
    </recommendedName>
</protein>
<accession>Q75KU4</accession>
<accession>B7ERN3</accession>
<name>CNBL4_ORYSJ</name>
<feature type="initiator methionine" description="Removed" evidence="2">
    <location>
        <position position="1"/>
    </location>
</feature>
<feature type="chain" id="PRO_0000337767" description="Calcineurin B-like protein 4">
    <location>
        <begin position="2"/>
        <end position="210"/>
    </location>
</feature>
<feature type="domain" description="EF-hand 1" evidence="7">
    <location>
        <begin position="31"/>
        <end position="66"/>
    </location>
</feature>
<feature type="domain" description="EF-hand 2" evidence="3">
    <location>
        <begin position="67"/>
        <end position="102"/>
    </location>
</feature>
<feature type="domain" description="EF-hand 3" evidence="3">
    <location>
        <begin position="104"/>
        <end position="139"/>
    </location>
</feature>
<feature type="domain" description="EF-hand 4" evidence="3">
    <location>
        <begin position="148"/>
        <end position="183"/>
    </location>
</feature>
<feature type="binding site" evidence="3">
    <location>
        <position position="161"/>
    </location>
    <ligand>
        <name>Ca(2+)</name>
        <dbReference type="ChEBI" id="CHEBI:29108"/>
    </ligand>
</feature>
<feature type="binding site" evidence="3">
    <location>
        <position position="163"/>
    </location>
    <ligand>
        <name>Ca(2+)</name>
        <dbReference type="ChEBI" id="CHEBI:29108"/>
    </ligand>
</feature>
<feature type="binding site" evidence="3">
    <location>
        <position position="165"/>
    </location>
    <ligand>
        <name>Ca(2+)</name>
        <dbReference type="ChEBI" id="CHEBI:29108"/>
    </ligand>
</feature>
<feature type="binding site" evidence="3">
    <location>
        <position position="167"/>
    </location>
    <ligand>
        <name>Ca(2+)</name>
        <dbReference type="ChEBI" id="CHEBI:29108"/>
    </ligand>
</feature>
<feature type="binding site" evidence="3">
    <location>
        <position position="172"/>
    </location>
    <ligand>
        <name>Ca(2+)</name>
        <dbReference type="ChEBI" id="CHEBI:29108"/>
    </ligand>
</feature>
<feature type="site" description="Involved in dimerization" evidence="1">
    <location>
        <position position="140"/>
    </location>
</feature>
<feature type="lipid moiety-binding region" description="N-myristoyl glycine" evidence="1">
    <location>
        <position position="2"/>
    </location>
</feature>
<sequence>MGCASSKQFKRPPGYEEPAVLAAQTTFTVNEVEALRELYNKMSYSIIKDGLIHKEEFQLALFRNSRKANLFADRVFDLFDLKRNGVIEFGEFVRSLSVFHPKAPKSEKTAFAFKLYDLRGTGYIEKEELREMVLALLDESDLHLSECAVEAIVDNTFSQADSNGDGRIDPEEWEEFVKANPASLRNMSLPYLQDITMAFPSFVMHSEAHD</sequence>
<reference key="1">
    <citation type="journal article" date="2008" name="Gene">
        <title>Expression analysis of the calcineurin B-like gene family in rice (Oryza sativa L.) under environmental stresses.</title>
        <authorList>
            <person name="Gu Z."/>
            <person name="Ma B."/>
            <person name="Jiang Y."/>
            <person name="Chen Z."/>
            <person name="Su X."/>
            <person name="Zhang H."/>
        </authorList>
    </citation>
    <scope>NUCLEOTIDE SEQUENCE [MRNA]</scope>
    <scope>TISSUE SPECIFICITY</scope>
    <scope>INDUCTION</scope>
    <scope>GENE FAMILY</scope>
    <source>
        <strain>cv. Nipponbare</strain>
        <tissue>Seedling</tissue>
    </source>
</reference>
<reference key="2">
    <citation type="journal article" date="2005" name="Mol. Genet. Genomics">
        <title>A fine physical map of the rice chromosome 5.</title>
        <authorList>
            <person name="Cheng C.-H."/>
            <person name="Chung M.C."/>
            <person name="Liu S.-M."/>
            <person name="Chen S.-K."/>
            <person name="Kao F.Y."/>
            <person name="Lin S.-J."/>
            <person name="Hsiao S.-H."/>
            <person name="Tseng I.C."/>
            <person name="Hsing Y.-I.C."/>
            <person name="Wu H.-P."/>
            <person name="Chen C.-S."/>
            <person name="Shaw J.-F."/>
            <person name="Wu J."/>
            <person name="Matsumoto T."/>
            <person name="Sasaki T."/>
            <person name="Chen H.-C."/>
            <person name="Chow T.-Y."/>
        </authorList>
    </citation>
    <scope>NUCLEOTIDE SEQUENCE [LARGE SCALE GENOMIC DNA]</scope>
    <source>
        <strain>cv. Nipponbare</strain>
    </source>
</reference>
<reference key="3">
    <citation type="journal article" date="2005" name="Nature">
        <title>The map-based sequence of the rice genome.</title>
        <authorList>
            <consortium name="International rice genome sequencing project (IRGSP)"/>
        </authorList>
    </citation>
    <scope>NUCLEOTIDE SEQUENCE [LARGE SCALE GENOMIC DNA]</scope>
    <source>
        <strain>cv. Nipponbare</strain>
    </source>
</reference>
<reference key="4">
    <citation type="journal article" date="2008" name="Nucleic Acids Res.">
        <title>The rice annotation project database (RAP-DB): 2008 update.</title>
        <authorList>
            <consortium name="The rice annotation project (RAP)"/>
        </authorList>
    </citation>
    <scope>GENOME REANNOTATION</scope>
    <source>
        <strain>cv. Nipponbare</strain>
    </source>
</reference>
<reference key="5">
    <citation type="journal article" date="2013" name="Rice">
        <title>Improvement of the Oryza sativa Nipponbare reference genome using next generation sequence and optical map data.</title>
        <authorList>
            <person name="Kawahara Y."/>
            <person name="de la Bastide M."/>
            <person name="Hamilton J.P."/>
            <person name="Kanamori H."/>
            <person name="McCombie W.R."/>
            <person name="Ouyang S."/>
            <person name="Schwartz D.C."/>
            <person name="Tanaka T."/>
            <person name="Wu J."/>
            <person name="Zhou S."/>
            <person name="Childs K.L."/>
            <person name="Davidson R.M."/>
            <person name="Lin H."/>
            <person name="Quesada-Ocampo L."/>
            <person name="Vaillancourt B."/>
            <person name="Sakai H."/>
            <person name="Lee S.S."/>
            <person name="Kim J."/>
            <person name="Numa H."/>
            <person name="Itoh T."/>
            <person name="Buell C.R."/>
            <person name="Matsumoto T."/>
        </authorList>
    </citation>
    <scope>GENOME REANNOTATION</scope>
    <source>
        <strain>cv. Nipponbare</strain>
    </source>
</reference>
<reference key="6">
    <citation type="journal article" date="2005" name="PLoS Biol.">
        <title>The genomes of Oryza sativa: a history of duplications.</title>
        <authorList>
            <person name="Yu J."/>
            <person name="Wang J."/>
            <person name="Lin W."/>
            <person name="Li S."/>
            <person name="Li H."/>
            <person name="Zhou J."/>
            <person name="Ni P."/>
            <person name="Dong W."/>
            <person name="Hu S."/>
            <person name="Zeng C."/>
            <person name="Zhang J."/>
            <person name="Zhang Y."/>
            <person name="Li R."/>
            <person name="Xu Z."/>
            <person name="Li S."/>
            <person name="Li X."/>
            <person name="Zheng H."/>
            <person name="Cong L."/>
            <person name="Lin L."/>
            <person name="Yin J."/>
            <person name="Geng J."/>
            <person name="Li G."/>
            <person name="Shi J."/>
            <person name="Liu J."/>
            <person name="Lv H."/>
            <person name="Li J."/>
            <person name="Wang J."/>
            <person name="Deng Y."/>
            <person name="Ran L."/>
            <person name="Shi X."/>
            <person name="Wang X."/>
            <person name="Wu Q."/>
            <person name="Li C."/>
            <person name="Ren X."/>
            <person name="Wang J."/>
            <person name="Wang X."/>
            <person name="Li D."/>
            <person name="Liu D."/>
            <person name="Zhang X."/>
            <person name="Ji Z."/>
            <person name="Zhao W."/>
            <person name="Sun Y."/>
            <person name="Zhang Z."/>
            <person name="Bao J."/>
            <person name="Han Y."/>
            <person name="Dong L."/>
            <person name="Ji J."/>
            <person name="Chen P."/>
            <person name="Wu S."/>
            <person name="Liu J."/>
            <person name="Xiao Y."/>
            <person name="Bu D."/>
            <person name="Tan J."/>
            <person name="Yang L."/>
            <person name="Ye C."/>
            <person name="Zhang J."/>
            <person name="Xu J."/>
            <person name="Zhou Y."/>
            <person name="Yu Y."/>
            <person name="Zhang B."/>
            <person name="Zhuang S."/>
            <person name="Wei H."/>
            <person name="Liu B."/>
            <person name="Lei M."/>
            <person name="Yu H."/>
            <person name="Li Y."/>
            <person name="Xu H."/>
            <person name="Wei S."/>
            <person name="He X."/>
            <person name="Fang L."/>
            <person name="Zhang Z."/>
            <person name="Zhang Y."/>
            <person name="Huang X."/>
            <person name="Su Z."/>
            <person name="Tong W."/>
            <person name="Li J."/>
            <person name="Tong Z."/>
            <person name="Li S."/>
            <person name="Ye J."/>
            <person name="Wang L."/>
            <person name="Fang L."/>
            <person name="Lei T."/>
            <person name="Chen C.-S."/>
            <person name="Chen H.-C."/>
            <person name="Xu Z."/>
            <person name="Li H."/>
            <person name="Huang H."/>
            <person name="Zhang F."/>
            <person name="Xu H."/>
            <person name="Li N."/>
            <person name="Zhao C."/>
            <person name="Li S."/>
            <person name="Dong L."/>
            <person name="Huang Y."/>
            <person name="Li L."/>
            <person name="Xi Y."/>
            <person name="Qi Q."/>
            <person name="Li W."/>
            <person name="Zhang B."/>
            <person name="Hu W."/>
            <person name="Zhang Y."/>
            <person name="Tian X."/>
            <person name="Jiao Y."/>
            <person name="Liang X."/>
            <person name="Jin J."/>
            <person name="Gao L."/>
            <person name="Zheng W."/>
            <person name="Hao B."/>
            <person name="Liu S.-M."/>
            <person name="Wang W."/>
            <person name="Yuan L."/>
            <person name="Cao M."/>
            <person name="McDermott J."/>
            <person name="Samudrala R."/>
            <person name="Wang J."/>
            <person name="Wong G.K.-S."/>
            <person name="Yang H."/>
        </authorList>
    </citation>
    <scope>NUCLEOTIDE SEQUENCE [LARGE SCALE GENOMIC DNA]</scope>
    <source>
        <strain>cv. Nipponbare</strain>
    </source>
</reference>
<reference key="7">
    <citation type="journal article" date="2003" name="Science">
        <title>Collection, mapping, and annotation of over 28,000 cDNA clones from japonica rice.</title>
        <authorList>
            <consortium name="The rice full-length cDNA consortium"/>
        </authorList>
    </citation>
    <scope>NUCLEOTIDE SEQUENCE [LARGE SCALE MRNA]</scope>
    <source>
        <strain>cv. Nipponbare</strain>
    </source>
</reference>
<reference key="8">
    <citation type="journal article" date="2004" name="Plant Physiol.">
        <title>Calcium sensors and their interacting protein kinases: genomics of the Arabidopsis and rice CBL-CIPK signaling networks.</title>
        <authorList>
            <person name="Kolukisaoglu U."/>
            <person name="Weinl S."/>
            <person name="Blazevic D."/>
            <person name="Batistic O."/>
            <person name="Kudla J."/>
        </authorList>
    </citation>
    <scope>GENE FAMILY</scope>
    <scope>NOMENCLATURE</scope>
</reference>
<reference key="9">
    <citation type="journal article" date="2005" name="Plant Physiol.">
        <title>A gibberellin-regulated calcineurin B in rice localizes to the tonoplast and is implicated in vacuole function.</title>
        <authorList>
            <person name="Hwang Y.-S."/>
            <person name="Bethke P.C."/>
            <person name="Cheong Y.H."/>
            <person name="Chang H.-S."/>
            <person name="Zhu T."/>
            <person name="Jones R.L."/>
        </authorList>
    </citation>
    <scope>SUBCELLULAR LOCATION</scope>
    <scope>GENE FAMILY</scope>
</reference>
<reference key="10">
    <citation type="journal article" date="2007" name="Plant Physiol.">
        <title>Conservation of the salt overly sensitive pathway in rice.</title>
        <authorList>
            <person name="Martinez-Atienza J."/>
            <person name="Jiang X."/>
            <person name="Garciadeblas B."/>
            <person name="Mendoza I."/>
            <person name="Zhu J.-K."/>
            <person name="Pardo J.M."/>
            <person name="Quintero F.J."/>
        </authorList>
    </citation>
    <scope>FUNCTION</scope>
    <scope>INTERACTION WITH CIPK24</scope>
</reference>
<keyword id="KW-0106">Calcium</keyword>
<keyword id="KW-1003">Cell membrane</keyword>
<keyword id="KW-0449">Lipoprotein</keyword>
<keyword id="KW-0472">Membrane</keyword>
<keyword id="KW-0479">Metal-binding</keyword>
<keyword id="KW-0519">Myristate</keyword>
<keyword id="KW-1185">Reference proteome</keyword>
<keyword id="KW-0677">Repeat</keyword>
<dbReference type="EMBL" id="DQ201198">
    <property type="protein sequence ID" value="ABA54179.1"/>
    <property type="molecule type" value="mRNA"/>
</dbReference>
<dbReference type="EMBL" id="AC097111">
    <property type="protein sequence ID" value="AAS75223.1"/>
    <property type="molecule type" value="Genomic_DNA"/>
</dbReference>
<dbReference type="EMBL" id="AC121365">
    <property type="protein sequence ID" value="AAT47091.1"/>
    <property type="molecule type" value="Genomic_DNA"/>
</dbReference>
<dbReference type="EMBL" id="AP008211">
    <property type="protein sequence ID" value="BAF18062.1"/>
    <property type="molecule type" value="Genomic_DNA"/>
</dbReference>
<dbReference type="EMBL" id="AP014961">
    <property type="protein sequence ID" value="BAS95062.1"/>
    <property type="molecule type" value="Genomic_DNA"/>
</dbReference>
<dbReference type="EMBL" id="CM000142">
    <property type="protein sequence ID" value="EEE64483.1"/>
    <property type="molecule type" value="Genomic_DNA"/>
</dbReference>
<dbReference type="EMBL" id="AK101368">
    <property type="protein sequence ID" value="BAG95030.1"/>
    <property type="molecule type" value="mRNA"/>
</dbReference>
<dbReference type="RefSeq" id="XP_015637956.1">
    <property type="nucleotide sequence ID" value="XM_015782470.1"/>
</dbReference>
<dbReference type="SMR" id="Q75KU4"/>
<dbReference type="BioGRID" id="808469">
    <property type="interactions" value="23"/>
</dbReference>
<dbReference type="FunCoup" id="Q75KU4">
    <property type="interactions" value="443"/>
</dbReference>
<dbReference type="STRING" id="39947.Q75KU4"/>
<dbReference type="PaxDb" id="39947-Q75KU4"/>
<dbReference type="EnsemblPlants" id="Os05t0534400-01">
    <property type="protein sequence ID" value="Os05t0534400-01"/>
    <property type="gene ID" value="Os05g0534400"/>
</dbReference>
<dbReference type="Gramene" id="Os05t0534400-01">
    <property type="protein sequence ID" value="Os05t0534400-01"/>
    <property type="gene ID" value="Os05g0534400"/>
</dbReference>
<dbReference type="KEGG" id="dosa:Os05g0534400"/>
<dbReference type="eggNOG" id="KOG0034">
    <property type="taxonomic scope" value="Eukaryota"/>
</dbReference>
<dbReference type="HOGENOM" id="CLU_061288_21_0_1"/>
<dbReference type="InParanoid" id="Q75KU4"/>
<dbReference type="OMA" id="MCSEAND"/>
<dbReference type="OrthoDB" id="191686at2759"/>
<dbReference type="Proteomes" id="UP000000763">
    <property type="component" value="Chromosome 5"/>
</dbReference>
<dbReference type="Proteomes" id="UP000007752">
    <property type="component" value="Chromosome 5"/>
</dbReference>
<dbReference type="Proteomes" id="UP000059680">
    <property type="component" value="Chromosome 5"/>
</dbReference>
<dbReference type="GO" id="GO:0005886">
    <property type="term" value="C:plasma membrane"/>
    <property type="evidence" value="ECO:0007669"/>
    <property type="project" value="UniProtKB-SubCell"/>
</dbReference>
<dbReference type="GO" id="GO:0005509">
    <property type="term" value="F:calcium ion binding"/>
    <property type="evidence" value="ECO:0007669"/>
    <property type="project" value="InterPro"/>
</dbReference>
<dbReference type="GO" id="GO:0019900">
    <property type="term" value="F:kinase binding"/>
    <property type="evidence" value="ECO:0007669"/>
    <property type="project" value="InterPro"/>
</dbReference>
<dbReference type="GO" id="GO:0019722">
    <property type="term" value="P:calcium-mediated signaling"/>
    <property type="evidence" value="ECO:0007669"/>
    <property type="project" value="InterPro"/>
</dbReference>
<dbReference type="CDD" id="cd00051">
    <property type="entry name" value="EFh"/>
    <property type="match status" value="1"/>
</dbReference>
<dbReference type="FunFam" id="1.10.238.10:FF:000073">
    <property type="entry name" value="calcineurin B-like protein 3"/>
    <property type="match status" value="1"/>
</dbReference>
<dbReference type="Gene3D" id="1.10.238.10">
    <property type="entry name" value="EF-hand"/>
    <property type="match status" value="1"/>
</dbReference>
<dbReference type="InterPro" id="IPR045198">
    <property type="entry name" value="CNBL1-10"/>
</dbReference>
<dbReference type="InterPro" id="IPR011992">
    <property type="entry name" value="EF-hand-dom_pair"/>
</dbReference>
<dbReference type="InterPro" id="IPR018247">
    <property type="entry name" value="EF_Hand_1_Ca_BS"/>
</dbReference>
<dbReference type="InterPro" id="IPR002048">
    <property type="entry name" value="EF_hand_dom"/>
</dbReference>
<dbReference type="PANTHER" id="PTHR23056">
    <property type="entry name" value="CALCINEURIN B"/>
    <property type="match status" value="1"/>
</dbReference>
<dbReference type="PANTHER" id="PTHR23056:SF110">
    <property type="entry name" value="CALMODULIN"/>
    <property type="match status" value="1"/>
</dbReference>
<dbReference type="Pfam" id="PF13202">
    <property type="entry name" value="EF-hand_5"/>
    <property type="match status" value="2"/>
</dbReference>
<dbReference type="PRINTS" id="PR00450">
    <property type="entry name" value="RECOVERIN"/>
</dbReference>
<dbReference type="SMART" id="SM00054">
    <property type="entry name" value="EFh"/>
    <property type="match status" value="3"/>
</dbReference>
<dbReference type="SUPFAM" id="SSF47473">
    <property type="entry name" value="EF-hand"/>
    <property type="match status" value="1"/>
</dbReference>
<dbReference type="PROSITE" id="PS00018">
    <property type="entry name" value="EF_HAND_1"/>
    <property type="match status" value="1"/>
</dbReference>
<dbReference type="PROSITE" id="PS50222">
    <property type="entry name" value="EF_HAND_2"/>
    <property type="match status" value="3"/>
</dbReference>
<organism>
    <name type="scientific">Oryza sativa subsp. japonica</name>
    <name type="common">Rice</name>
    <dbReference type="NCBI Taxonomy" id="39947"/>
    <lineage>
        <taxon>Eukaryota</taxon>
        <taxon>Viridiplantae</taxon>
        <taxon>Streptophyta</taxon>
        <taxon>Embryophyta</taxon>
        <taxon>Tracheophyta</taxon>
        <taxon>Spermatophyta</taxon>
        <taxon>Magnoliopsida</taxon>
        <taxon>Liliopsida</taxon>
        <taxon>Poales</taxon>
        <taxon>Poaceae</taxon>
        <taxon>BOP clade</taxon>
        <taxon>Oryzoideae</taxon>
        <taxon>Oryzeae</taxon>
        <taxon>Oryzinae</taxon>
        <taxon>Oryza</taxon>
        <taxon>Oryza sativa</taxon>
    </lineage>
</organism>
<gene>
    <name type="primary">CBL4</name>
    <name type="ordered locus">Os05g0534400</name>
    <name type="ordered locus">LOC_Os05g45810</name>
    <name type="ORF">OJ1014_C08.4</name>
    <name evidence="8" type="ORF">OsJ_19333</name>
    <name type="ORF">OSJNBa0053E05.21</name>
</gene>
<proteinExistence type="evidence at protein level"/>